<sequence length="212" mass="23434">MQNVDNTAVIDAANALPGRLTSIPVSPLHAVHGHSMTYIPEGMDLAFFAMGCFWGAERLFWQQPGVYSTAAGYSGGHTPNPTYHEVCSGRTGHAEVVRVVFDPAVISYQQLLQIFWENHDPAQGMRQGGDVGTQYRSAIYVLTPEQEEQAHKSRERFQQAMEKAGDQRVITSEITVALPFYYAEDDHQQYLHKNPHGYCGLGGIGVCLPPNV</sequence>
<proteinExistence type="inferred from homology"/>
<protein>
    <recommendedName>
        <fullName evidence="1">Peptide methionine sulfoxide reductase MsrA</fullName>
        <shortName evidence="1">Protein-methionine-S-oxide reductase</shortName>
        <ecNumber evidence="1">1.8.4.11</ecNumber>
    </recommendedName>
    <alternativeName>
        <fullName evidence="1">Peptide-methionine (S)-S-oxide reductase</fullName>
        <shortName evidence="1">Peptide Met(O) reductase</shortName>
    </alternativeName>
</protein>
<gene>
    <name evidence="1" type="primary">msrA</name>
    <name type="ordered locus">YPA_0075</name>
</gene>
<evidence type="ECO:0000255" key="1">
    <source>
        <dbReference type="HAMAP-Rule" id="MF_01401"/>
    </source>
</evidence>
<keyword id="KW-0560">Oxidoreductase</keyword>
<name>MSRA_YERPA</name>
<dbReference type="EC" id="1.8.4.11" evidence="1"/>
<dbReference type="EMBL" id="CP000308">
    <property type="protein sequence ID" value="ABG12044.1"/>
    <property type="molecule type" value="Genomic_DNA"/>
</dbReference>
<dbReference type="RefSeq" id="WP_002210165.1">
    <property type="nucleotide sequence ID" value="NZ_CP009906.1"/>
</dbReference>
<dbReference type="SMR" id="Q1CBX8"/>
<dbReference type="GeneID" id="57975189"/>
<dbReference type="KEGG" id="ypa:YPA_0075"/>
<dbReference type="Proteomes" id="UP000001971">
    <property type="component" value="Chromosome"/>
</dbReference>
<dbReference type="GO" id="GO:0005737">
    <property type="term" value="C:cytoplasm"/>
    <property type="evidence" value="ECO:0007669"/>
    <property type="project" value="TreeGrafter"/>
</dbReference>
<dbReference type="GO" id="GO:0036456">
    <property type="term" value="F:L-methionine-(S)-S-oxide reductase activity"/>
    <property type="evidence" value="ECO:0007669"/>
    <property type="project" value="TreeGrafter"/>
</dbReference>
<dbReference type="GO" id="GO:0008113">
    <property type="term" value="F:peptide-methionine (S)-S-oxide reductase activity"/>
    <property type="evidence" value="ECO:0007669"/>
    <property type="project" value="UniProtKB-UniRule"/>
</dbReference>
<dbReference type="GO" id="GO:0034599">
    <property type="term" value="P:cellular response to oxidative stress"/>
    <property type="evidence" value="ECO:0007669"/>
    <property type="project" value="TreeGrafter"/>
</dbReference>
<dbReference type="GO" id="GO:0036211">
    <property type="term" value="P:protein modification process"/>
    <property type="evidence" value="ECO:0007669"/>
    <property type="project" value="UniProtKB-UniRule"/>
</dbReference>
<dbReference type="FunFam" id="3.30.1060.10:FF:000001">
    <property type="entry name" value="Peptide methionine sulfoxide reductase MsrA"/>
    <property type="match status" value="1"/>
</dbReference>
<dbReference type="Gene3D" id="3.30.1060.10">
    <property type="entry name" value="Peptide methionine sulphoxide reductase MsrA"/>
    <property type="match status" value="1"/>
</dbReference>
<dbReference type="HAMAP" id="MF_01401">
    <property type="entry name" value="MsrA"/>
    <property type="match status" value="1"/>
</dbReference>
<dbReference type="InterPro" id="IPR002569">
    <property type="entry name" value="Met_Sox_Rdtase_MsrA_dom"/>
</dbReference>
<dbReference type="InterPro" id="IPR036509">
    <property type="entry name" value="Met_Sox_Rdtase_MsrA_sf"/>
</dbReference>
<dbReference type="InterPro" id="IPR050162">
    <property type="entry name" value="MsrA_MetSO_reductase"/>
</dbReference>
<dbReference type="NCBIfam" id="TIGR00401">
    <property type="entry name" value="msrA"/>
    <property type="match status" value="1"/>
</dbReference>
<dbReference type="PANTHER" id="PTHR42799">
    <property type="entry name" value="MITOCHONDRIAL PEPTIDE METHIONINE SULFOXIDE REDUCTASE"/>
    <property type="match status" value="1"/>
</dbReference>
<dbReference type="PANTHER" id="PTHR42799:SF2">
    <property type="entry name" value="MITOCHONDRIAL PEPTIDE METHIONINE SULFOXIDE REDUCTASE"/>
    <property type="match status" value="1"/>
</dbReference>
<dbReference type="Pfam" id="PF01625">
    <property type="entry name" value="PMSR"/>
    <property type="match status" value="1"/>
</dbReference>
<dbReference type="SUPFAM" id="SSF55068">
    <property type="entry name" value="Peptide methionine sulfoxide reductase"/>
    <property type="match status" value="1"/>
</dbReference>
<comment type="function">
    <text evidence="1">Has an important function as a repair enzyme for proteins that have been inactivated by oxidation. Catalyzes the reversible oxidation-reduction of methionine sulfoxide in proteins to methionine.</text>
</comment>
<comment type="catalytic activity">
    <reaction evidence="1">
        <text>L-methionyl-[protein] + [thioredoxin]-disulfide + H2O = L-methionyl-(S)-S-oxide-[protein] + [thioredoxin]-dithiol</text>
        <dbReference type="Rhea" id="RHEA:14217"/>
        <dbReference type="Rhea" id="RHEA-COMP:10698"/>
        <dbReference type="Rhea" id="RHEA-COMP:10700"/>
        <dbReference type="Rhea" id="RHEA-COMP:12313"/>
        <dbReference type="Rhea" id="RHEA-COMP:12315"/>
        <dbReference type="ChEBI" id="CHEBI:15377"/>
        <dbReference type="ChEBI" id="CHEBI:16044"/>
        <dbReference type="ChEBI" id="CHEBI:29950"/>
        <dbReference type="ChEBI" id="CHEBI:44120"/>
        <dbReference type="ChEBI" id="CHEBI:50058"/>
        <dbReference type="EC" id="1.8.4.11"/>
    </reaction>
</comment>
<comment type="catalytic activity">
    <reaction evidence="1">
        <text>[thioredoxin]-disulfide + L-methionine + H2O = L-methionine (S)-S-oxide + [thioredoxin]-dithiol</text>
        <dbReference type="Rhea" id="RHEA:19993"/>
        <dbReference type="Rhea" id="RHEA-COMP:10698"/>
        <dbReference type="Rhea" id="RHEA-COMP:10700"/>
        <dbReference type="ChEBI" id="CHEBI:15377"/>
        <dbReference type="ChEBI" id="CHEBI:29950"/>
        <dbReference type="ChEBI" id="CHEBI:50058"/>
        <dbReference type="ChEBI" id="CHEBI:57844"/>
        <dbReference type="ChEBI" id="CHEBI:58772"/>
        <dbReference type="EC" id="1.8.4.11"/>
    </reaction>
</comment>
<comment type="similarity">
    <text evidence="1">Belongs to the MsrA Met sulfoxide reductase family.</text>
</comment>
<feature type="chain" id="PRO_1000068375" description="Peptide methionine sulfoxide reductase MsrA">
    <location>
        <begin position="1"/>
        <end position="212"/>
    </location>
</feature>
<feature type="active site" evidence="1">
    <location>
        <position position="52"/>
    </location>
</feature>
<accession>Q1CBX8</accession>
<reference key="1">
    <citation type="journal article" date="2006" name="J. Bacteriol.">
        <title>Complete genome sequence of Yersinia pestis strains Antiqua and Nepal516: evidence of gene reduction in an emerging pathogen.</title>
        <authorList>
            <person name="Chain P.S.G."/>
            <person name="Hu P."/>
            <person name="Malfatti S.A."/>
            <person name="Radnedge L."/>
            <person name="Larimer F."/>
            <person name="Vergez L.M."/>
            <person name="Worsham P."/>
            <person name="Chu M.C."/>
            <person name="Andersen G.L."/>
        </authorList>
    </citation>
    <scope>NUCLEOTIDE SEQUENCE [LARGE SCALE GENOMIC DNA]</scope>
    <source>
        <strain>Antiqua</strain>
    </source>
</reference>
<organism>
    <name type="scientific">Yersinia pestis bv. Antiqua (strain Antiqua)</name>
    <dbReference type="NCBI Taxonomy" id="360102"/>
    <lineage>
        <taxon>Bacteria</taxon>
        <taxon>Pseudomonadati</taxon>
        <taxon>Pseudomonadota</taxon>
        <taxon>Gammaproteobacteria</taxon>
        <taxon>Enterobacterales</taxon>
        <taxon>Yersiniaceae</taxon>
        <taxon>Yersinia</taxon>
    </lineage>
</organism>